<sequence>MQHLVIRRPDDWHLHLRDGGMLRGVIADTSRHFARAIIMPNLVPPVVTSADAATYRERILAAIPAGHRFEPLMTLYLTEGTDPDDVEEGFRSGLVKAVKLYPAGATTNSSSGVRDIDKAMPVLERMAEVGVPLCVHGEVTTADVDIFDREAVFIETVLDPLRRRLPDLRITMEHVTTKDGVDYIREHAVNLAGSITTHHLIINRNAILVGGIKPHYYCLPVAKREMHRLALREAAISGDVRFFLGTDSAPHVDPLKECACGCAGIYTSINSLSCLAHVFEEEGALDRLEAFTSLNGPAWYGLPPNEETITLRKQEEPVGYPAKIETEAGPVTVFDPMFPLYWTVIEA</sequence>
<keyword id="KW-0378">Hydrolase</keyword>
<keyword id="KW-0479">Metal-binding</keyword>
<keyword id="KW-0665">Pyrimidine biosynthesis</keyword>
<keyword id="KW-0862">Zinc</keyword>
<evidence type="ECO:0000255" key="1">
    <source>
        <dbReference type="HAMAP-Rule" id="MF_00219"/>
    </source>
</evidence>
<feature type="chain" id="PRO_1000024066" description="Dihydroorotase">
    <location>
        <begin position="1"/>
        <end position="347"/>
    </location>
</feature>
<feature type="active site" evidence="1">
    <location>
        <position position="247"/>
    </location>
</feature>
<feature type="binding site" evidence="1">
    <location>
        <position position="13"/>
    </location>
    <ligand>
        <name>Zn(2+)</name>
        <dbReference type="ChEBI" id="CHEBI:29105"/>
        <label>1</label>
    </ligand>
</feature>
<feature type="binding site" evidence="1">
    <location>
        <begin position="15"/>
        <end position="17"/>
    </location>
    <ligand>
        <name>substrate</name>
    </ligand>
</feature>
<feature type="binding site" evidence="1">
    <location>
        <position position="15"/>
    </location>
    <ligand>
        <name>Zn(2+)</name>
        <dbReference type="ChEBI" id="CHEBI:29105"/>
        <label>1</label>
    </ligand>
</feature>
<feature type="binding site" evidence="1">
    <location>
        <position position="41"/>
    </location>
    <ligand>
        <name>substrate</name>
    </ligand>
</feature>
<feature type="binding site" description="via carbamate group" evidence="1">
    <location>
        <position position="99"/>
    </location>
    <ligand>
        <name>Zn(2+)</name>
        <dbReference type="ChEBI" id="CHEBI:29105"/>
        <label>1</label>
    </ligand>
</feature>
<feature type="binding site" description="via carbamate group" evidence="1">
    <location>
        <position position="99"/>
    </location>
    <ligand>
        <name>Zn(2+)</name>
        <dbReference type="ChEBI" id="CHEBI:29105"/>
        <label>2</label>
    </ligand>
</feature>
<feature type="binding site" evidence="1">
    <location>
        <position position="136"/>
    </location>
    <ligand>
        <name>substrate</name>
    </ligand>
</feature>
<feature type="binding site" evidence="1">
    <location>
        <position position="136"/>
    </location>
    <ligand>
        <name>Zn(2+)</name>
        <dbReference type="ChEBI" id="CHEBI:29105"/>
        <label>2</label>
    </ligand>
</feature>
<feature type="binding site" evidence="1">
    <location>
        <position position="174"/>
    </location>
    <ligand>
        <name>Zn(2+)</name>
        <dbReference type="ChEBI" id="CHEBI:29105"/>
        <label>2</label>
    </ligand>
</feature>
<feature type="binding site" evidence="1">
    <location>
        <position position="219"/>
    </location>
    <ligand>
        <name>substrate</name>
    </ligand>
</feature>
<feature type="binding site" evidence="1">
    <location>
        <position position="247"/>
    </location>
    <ligand>
        <name>Zn(2+)</name>
        <dbReference type="ChEBI" id="CHEBI:29105"/>
        <label>1</label>
    </ligand>
</feature>
<feature type="binding site" evidence="1">
    <location>
        <position position="251"/>
    </location>
    <ligand>
        <name>substrate</name>
    </ligand>
</feature>
<feature type="binding site" evidence="1">
    <location>
        <position position="263"/>
    </location>
    <ligand>
        <name>substrate</name>
    </ligand>
</feature>
<feature type="modified residue" description="N6-carboxylysine" evidence="1">
    <location>
        <position position="99"/>
    </location>
</feature>
<dbReference type="EC" id="3.5.2.3" evidence="1"/>
<dbReference type="EMBL" id="CP000738">
    <property type="protein sequence ID" value="ABR58966.1"/>
    <property type="molecule type" value="Genomic_DNA"/>
</dbReference>
<dbReference type="RefSeq" id="WP_011974319.1">
    <property type="nucleotide sequence ID" value="NC_009636.1"/>
</dbReference>
<dbReference type="RefSeq" id="YP_001325801.1">
    <property type="nucleotide sequence ID" value="NC_009636.1"/>
</dbReference>
<dbReference type="SMR" id="A6U5N6"/>
<dbReference type="STRING" id="366394.Smed_0106"/>
<dbReference type="MEROPS" id="M38.A02"/>
<dbReference type="GeneID" id="61611234"/>
<dbReference type="KEGG" id="smd:Smed_0106"/>
<dbReference type="PATRIC" id="fig|366394.8.peg.3162"/>
<dbReference type="eggNOG" id="COG0418">
    <property type="taxonomic scope" value="Bacteria"/>
</dbReference>
<dbReference type="HOGENOM" id="CLU_041558_1_0_5"/>
<dbReference type="OrthoDB" id="9808095at2"/>
<dbReference type="UniPathway" id="UPA00070">
    <property type="reaction ID" value="UER00117"/>
</dbReference>
<dbReference type="Proteomes" id="UP000001108">
    <property type="component" value="Chromosome"/>
</dbReference>
<dbReference type="GO" id="GO:0005829">
    <property type="term" value="C:cytosol"/>
    <property type="evidence" value="ECO:0007669"/>
    <property type="project" value="TreeGrafter"/>
</dbReference>
<dbReference type="GO" id="GO:0004151">
    <property type="term" value="F:dihydroorotase activity"/>
    <property type="evidence" value="ECO:0007669"/>
    <property type="project" value="UniProtKB-UniRule"/>
</dbReference>
<dbReference type="GO" id="GO:0008270">
    <property type="term" value="F:zinc ion binding"/>
    <property type="evidence" value="ECO:0007669"/>
    <property type="project" value="UniProtKB-UniRule"/>
</dbReference>
<dbReference type="GO" id="GO:0006207">
    <property type="term" value="P:'de novo' pyrimidine nucleobase biosynthetic process"/>
    <property type="evidence" value="ECO:0007669"/>
    <property type="project" value="TreeGrafter"/>
</dbReference>
<dbReference type="GO" id="GO:0044205">
    <property type="term" value="P:'de novo' UMP biosynthetic process"/>
    <property type="evidence" value="ECO:0007669"/>
    <property type="project" value="UniProtKB-UniRule"/>
</dbReference>
<dbReference type="CDD" id="cd01294">
    <property type="entry name" value="DHOase"/>
    <property type="match status" value="1"/>
</dbReference>
<dbReference type="Gene3D" id="3.20.20.140">
    <property type="entry name" value="Metal-dependent hydrolases"/>
    <property type="match status" value="1"/>
</dbReference>
<dbReference type="HAMAP" id="MF_00219">
    <property type="entry name" value="PyrC_classII"/>
    <property type="match status" value="1"/>
</dbReference>
<dbReference type="InterPro" id="IPR006680">
    <property type="entry name" value="Amidohydro-rel"/>
</dbReference>
<dbReference type="InterPro" id="IPR004721">
    <property type="entry name" value="DHOdimr"/>
</dbReference>
<dbReference type="InterPro" id="IPR002195">
    <property type="entry name" value="Dihydroorotase_CS"/>
</dbReference>
<dbReference type="InterPro" id="IPR032466">
    <property type="entry name" value="Metal_Hydrolase"/>
</dbReference>
<dbReference type="NCBIfam" id="TIGR00856">
    <property type="entry name" value="pyrC_dimer"/>
    <property type="match status" value="1"/>
</dbReference>
<dbReference type="PANTHER" id="PTHR43137">
    <property type="entry name" value="DIHYDROOROTASE"/>
    <property type="match status" value="1"/>
</dbReference>
<dbReference type="PANTHER" id="PTHR43137:SF1">
    <property type="entry name" value="DIHYDROOROTASE"/>
    <property type="match status" value="1"/>
</dbReference>
<dbReference type="Pfam" id="PF01979">
    <property type="entry name" value="Amidohydro_1"/>
    <property type="match status" value="1"/>
</dbReference>
<dbReference type="PIRSF" id="PIRSF001237">
    <property type="entry name" value="DHOdimr"/>
    <property type="match status" value="1"/>
</dbReference>
<dbReference type="SUPFAM" id="SSF51556">
    <property type="entry name" value="Metallo-dependent hydrolases"/>
    <property type="match status" value="1"/>
</dbReference>
<dbReference type="PROSITE" id="PS00482">
    <property type="entry name" value="DIHYDROOROTASE_1"/>
    <property type="match status" value="1"/>
</dbReference>
<dbReference type="PROSITE" id="PS00483">
    <property type="entry name" value="DIHYDROOROTASE_2"/>
    <property type="match status" value="1"/>
</dbReference>
<reference key="1">
    <citation type="submission" date="2007-06" db="EMBL/GenBank/DDBJ databases">
        <title>Complete sequence of Sinorhizobium medicae WSM419 chromosome.</title>
        <authorList>
            <consortium name="US DOE Joint Genome Institute"/>
            <person name="Copeland A."/>
            <person name="Lucas S."/>
            <person name="Lapidus A."/>
            <person name="Barry K."/>
            <person name="Glavina del Rio T."/>
            <person name="Dalin E."/>
            <person name="Tice H."/>
            <person name="Pitluck S."/>
            <person name="Chain P."/>
            <person name="Malfatti S."/>
            <person name="Shin M."/>
            <person name="Vergez L."/>
            <person name="Schmutz J."/>
            <person name="Larimer F."/>
            <person name="Land M."/>
            <person name="Hauser L."/>
            <person name="Kyrpides N."/>
            <person name="Mikhailova N."/>
            <person name="Reeve W.G."/>
            <person name="Richardson P."/>
        </authorList>
    </citation>
    <scope>NUCLEOTIDE SEQUENCE [LARGE SCALE GENOMIC DNA]</scope>
    <source>
        <strain>WSM419</strain>
    </source>
</reference>
<name>PYRC_SINMW</name>
<gene>
    <name evidence="1" type="primary">pyrC</name>
    <name type="ordered locus">Smed_0106</name>
</gene>
<accession>A6U5N6</accession>
<protein>
    <recommendedName>
        <fullName evidence="1">Dihydroorotase</fullName>
        <shortName evidence="1">DHOase</shortName>
        <ecNumber evidence="1">3.5.2.3</ecNumber>
    </recommendedName>
</protein>
<proteinExistence type="inferred from homology"/>
<comment type="function">
    <text evidence="1">Catalyzes the reversible cyclization of carbamoyl aspartate to dihydroorotate.</text>
</comment>
<comment type="catalytic activity">
    <reaction evidence="1">
        <text>(S)-dihydroorotate + H2O = N-carbamoyl-L-aspartate + H(+)</text>
        <dbReference type="Rhea" id="RHEA:24296"/>
        <dbReference type="ChEBI" id="CHEBI:15377"/>
        <dbReference type="ChEBI" id="CHEBI:15378"/>
        <dbReference type="ChEBI" id="CHEBI:30864"/>
        <dbReference type="ChEBI" id="CHEBI:32814"/>
        <dbReference type="EC" id="3.5.2.3"/>
    </reaction>
</comment>
<comment type="cofactor">
    <cofactor evidence="1">
        <name>Zn(2+)</name>
        <dbReference type="ChEBI" id="CHEBI:29105"/>
    </cofactor>
    <text evidence="1">Binds 2 Zn(2+) ions per subunit.</text>
</comment>
<comment type="pathway">
    <text evidence="1">Pyrimidine metabolism; UMP biosynthesis via de novo pathway; (S)-dihydroorotate from bicarbonate: step 3/3.</text>
</comment>
<comment type="subunit">
    <text evidence="1">Homodimer.</text>
</comment>
<comment type="similarity">
    <text evidence="1">Belongs to the metallo-dependent hydrolases superfamily. DHOase family. Class II DHOase subfamily.</text>
</comment>
<organism>
    <name type="scientific">Sinorhizobium medicae (strain WSM419)</name>
    <name type="common">Ensifer medicae</name>
    <dbReference type="NCBI Taxonomy" id="366394"/>
    <lineage>
        <taxon>Bacteria</taxon>
        <taxon>Pseudomonadati</taxon>
        <taxon>Pseudomonadota</taxon>
        <taxon>Alphaproteobacteria</taxon>
        <taxon>Hyphomicrobiales</taxon>
        <taxon>Rhizobiaceae</taxon>
        <taxon>Sinorhizobium/Ensifer group</taxon>
        <taxon>Sinorhizobium</taxon>
    </lineage>
</organism>